<name>UL15A_HCMVA</name>
<comment type="subcellular location">
    <subcellularLocation>
        <location evidence="3">Host membrane</location>
        <topology evidence="3">Single-pass membrane protein</topology>
    </subcellularLocation>
</comment>
<comment type="similarity">
    <text evidence="3">Belongs to the HHV-5 UL15A protein family.</text>
</comment>
<comment type="sequence caution" evidence="3">
    <conflict type="erroneous gene model prediction">
        <sequence resource="EMBL-CDS" id="CAA35415"/>
    </conflict>
</comment>
<accession>P16844</accession>
<accession>Q7M6G0</accession>
<proteinExistence type="inferred from homology"/>
<keyword id="KW-0325">Glycoprotein</keyword>
<keyword id="KW-1043">Host membrane</keyword>
<keyword id="KW-0472">Membrane</keyword>
<keyword id="KW-1185">Reference proteome</keyword>
<keyword id="KW-0812">Transmembrane</keyword>
<keyword id="KW-1133">Transmembrane helix</keyword>
<dbReference type="EMBL" id="X17403">
    <property type="protein sequence ID" value="CAA35415.1"/>
    <property type="status" value="ALT_SEQ"/>
    <property type="molecule type" value="Genomic_DNA"/>
</dbReference>
<dbReference type="EMBL" id="BK000394">
    <property type="protein sequence ID" value="DAA00231.1"/>
    <property type="molecule type" value="Genomic_DNA"/>
</dbReference>
<dbReference type="PIR" id="S09779">
    <property type="entry name" value="S09779"/>
</dbReference>
<dbReference type="SMR" id="P16844"/>
<dbReference type="GlyCosmos" id="P16844">
    <property type="glycosylation" value="1 site, No reported glycans"/>
</dbReference>
<dbReference type="Proteomes" id="UP000008991">
    <property type="component" value="Segment"/>
</dbReference>
<dbReference type="Proteomes" id="UP000008992">
    <property type="component" value="Segment"/>
</dbReference>
<dbReference type="GO" id="GO:0033644">
    <property type="term" value="C:host cell membrane"/>
    <property type="evidence" value="ECO:0007669"/>
    <property type="project" value="UniProtKB-SubCell"/>
</dbReference>
<dbReference type="GO" id="GO:0016020">
    <property type="term" value="C:membrane"/>
    <property type="evidence" value="ECO:0007669"/>
    <property type="project" value="UniProtKB-KW"/>
</dbReference>
<evidence type="ECO:0000255" key="1"/>
<evidence type="ECO:0000256" key="2">
    <source>
        <dbReference type="SAM" id="MobiDB-lite"/>
    </source>
</evidence>
<evidence type="ECO:0000305" key="3"/>
<organism>
    <name type="scientific">Human cytomegalovirus (strain AD169)</name>
    <name type="common">HHV-5</name>
    <name type="synonym">Human herpesvirus 5</name>
    <dbReference type="NCBI Taxonomy" id="10360"/>
    <lineage>
        <taxon>Viruses</taxon>
        <taxon>Duplodnaviria</taxon>
        <taxon>Heunggongvirae</taxon>
        <taxon>Peploviricota</taxon>
        <taxon>Herviviricetes</taxon>
        <taxon>Herpesvirales</taxon>
        <taxon>Orthoherpesviridae</taxon>
        <taxon>Betaherpesvirinae</taxon>
        <taxon>Cytomegalovirus</taxon>
        <taxon>Cytomegalovirus humanbeta5</taxon>
        <taxon>Human cytomegalovirus</taxon>
    </lineage>
</organism>
<gene>
    <name type="primary">UL15A</name>
</gene>
<organismHost>
    <name type="scientific">Homo sapiens</name>
    <name type="common">Human</name>
    <dbReference type="NCBI Taxonomy" id="9606"/>
</organismHost>
<reference key="1">
    <citation type="journal article" date="1990" name="Curr. Top. Microbiol. Immunol.">
        <title>Analysis of the protein-coding content of the sequence of human cytomegalovirus strain AD169.</title>
        <authorList>
            <person name="Chee M.S."/>
            <person name="Bankier A.T."/>
            <person name="Beck S."/>
            <person name="Bohni R."/>
            <person name="Brown C.M."/>
            <person name="Cerny R."/>
            <person name="Horsnell T."/>
            <person name="Hutchison C.A. III"/>
            <person name="Kouzarides T."/>
            <person name="Martignetti J.A."/>
            <person name="Preddie E."/>
            <person name="Satchwell S.C."/>
            <person name="Tomlinson P."/>
            <person name="Weston K.M."/>
            <person name="Barrell B.G."/>
        </authorList>
    </citation>
    <scope>NUCLEOTIDE SEQUENCE [LARGE SCALE GENOMIC DNA]</scope>
</reference>
<reference key="2">
    <citation type="journal article" date="2003" name="J. Gen. Virol.">
        <title>The human cytomegalovirus genome revisited: comparison with the chimpanzee cytomegalovirus genome.</title>
        <authorList>
            <person name="Davison A.J."/>
            <person name="Dolan A."/>
            <person name="Akter P."/>
            <person name="Addison C."/>
            <person name="Dargan D.J."/>
            <person name="Alcendor D.J."/>
            <person name="McGeoch D.J."/>
            <person name="Hayward G.S."/>
        </authorList>
    </citation>
    <scope>GENOME REANNOTATION</scope>
    <scope>SEQUENCE REVISION</scope>
</reference>
<reference key="3">
    <citation type="journal article" date="2003" name="J. Gen. Virol.">
        <authorList>
            <person name="Davison A.J."/>
            <person name="Dolan A."/>
            <person name="Akter P."/>
            <person name="Addison C."/>
            <person name="Dargan D.J."/>
            <person name="Alcendor D.J."/>
            <person name="McGeoch D.J."/>
            <person name="Hayward G.S."/>
        </authorList>
    </citation>
    <scope>ERRATUM OF PUBMED:12533697</scope>
</reference>
<sequence length="102" mass="11151">MKRMIRSHGRKTECQMTSAGERRGSAVGAPICGSGTRRGSGANERRDSDVGPIAHSSGTRRGSANETSACTRTDHQKADIGLWFMFLVFGLCSWLAMRYRAQ</sequence>
<feature type="chain" id="PRO_0000115309" description="Uncharacterized protein UL15A">
    <location>
        <begin position="1"/>
        <end position="102"/>
    </location>
</feature>
<feature type="topological domain" description="Extracellular" evidence="1">
    <location>
        <begin position="1"/>
        <end position="79"/>
    </location>
</feature>
<feature type="transmembrane region" description="Helical" evidence="1">
    <location>
        <begin position="80"/>
        <end position="97"/>
    </location>
</feature>
<feature type="topological domain" description="Cytoplasmic" evidence="1">
    <location>
        <begin position="98"/>
        <end position="102"/>
    </location>
</feature>
<feature type="region of interest" description="Disordered" evidence="2">
    <location>
        <begin position="1"/>
        <end position="71"/>
    </location>
</feature>
<feature type="compositionally biased region" description="Polar residues" evidence="2">
    <location>
        <begin position="56"/>
        <end position="71"/>
    </location>
</feature>
<feature type="glycosylation site" description="N-linked (GlcNAc...) asparagine; by host" evidence="1">
    <location>
        <position position="65"/>
    </location>
</feature>
<protein>
    <recommendedName>
        <fullName>Uncharacterized protein UL15A</fullName>
    </recommendedName>
</protein>